<keyword id="KW-0028">Amino-acid biosynthesis</keyword>
<keyword id="KW-0963">Cytoplasm</keyword>
<keyword id="KW-0554">One-carbon metabolism</keyword>
<keyword id="KW-0663">Pyridoxal phosphate</keyword>
<keyword id="KW-0808">Transferase</keyword>
<comment type="function">
    <text evidence="1">Catalyzes the reversible interconversion of serine and glycine with a modified folate serving as the one-carbon carrier. Also exhibits a pteridine-independent aldolase activity toward beta-hydroxyamino acids, producing glycine and aldehydes, via a retro-aldol mechanism.</text>
</comment>
<comment type="cofactor">
    <cofactor evidence="1">
        <name>pyridoxal 5'-phosphate</name>
        <dbReference type="ChEBI" id="CHEBI:597326"/>
    </cofactor>
</comment>
<comment type="pathway">
    <text evidence="1">Amino-acid biosynthesis; glycine biosynthesis; glycine from L-serine: step 1/1.</text>
</comment>
<comment type="subunit">
    <text evidence="1">Homodimer.</text>
</comment>
<comment type="subcellular location">
    <subcellularLocation>
        <location evidence="1">Cytoplasm</location>
    </subcellularLocation>
</comment>
<comment type="similarity">
    <text evidence="1">Belongs to the SHMT family.</text>
</comment>
<evidence type="ECO:0000255" key="1">
    <source>
        <dbReference type="HAMAP-Rule" id="MF_00051"/>
    </source>
</evidence>
<reference key="1">
    <citation type="submission" date="2008-03" db="EMBL/GenBank/DDBJ databases">
        <title>Complete sequence of Thermoproteus neutrophilus V24Sta.</title>
        <authorList>
            <consortium name="US DOE Joint Genome Institute"/>
            <person name="Copeland A."/>
            <person name="Lucas S."/>
            <person name="Lapidus A."/>
            <person name="Glavina del Rio T."/>
            <person name="Dalin E."/>
            <person name="Tice H."/>
            <person name="Bruce D."/>
            <person name="Goodwin L."/>
            <person name="Pitluck S."/>
            <person name="Sims D."/>
            <person name="Brettin T."/>
            <person name="Detter J.C."/>
            <person name="Han C."/>
            <person name="Kuske C.R."/>
            <person name="Schmutz J."/>
            <person name="Larimer F."/>
            <person name="Land M."/>
            <person name="Hauser L."/>
            <person name="Kyrpides N."/>
            <person name="Mikhailova N."/>
            <person name="Biddle J.F."/>
            <person name="Zhang Z."/>
            <person name="Fitz-Gibbon S.T."/>
            <person name="Lowe T.M."/>
            <person name="Saltikov C."/>
            <person name="House C.H."/>
            <person name="Richardson P."/>
        </authorList>
    </citation>
    <scope>NUCLEOTIDE SEQUENCE [LARGE SCALE GENOMIC DNA]</scope>
    <source>
        <strain>DSM 2338 / JCM 9278 / NBRC 100436 / V24Sta</strain>
    </source>
</reference>
<gene>
    <name evidence="1" type="primary">glyA</name>
    <name type="ordered locus">Tneu_0045</name>
</gene>
<proteinExistence type="inferred from homology"/>
<accession>B1YA29</accession>
<dbReference type="EC" id="2.1.2.-" evidence="1"/>
<dbReference type="EMBL" id="CP001014">
    <property type="protein sequence ID" value="ACB39003.1"/>
    <property type="molecule type" value="Genomic_DNA"/>
</dbReference>
<dbReference type="RefSeq" id="WP_012349424.1">
    <property type="nucleotide sequence ID" value="NC_010525.1"/>
</dbReference>
<dbReference type="SMR" id="B1YA29"/>
<dbReference type="STRING" id="444157.Tneu_0045"/>
<dbReference type="GeneID" id="6164800"/>
<dbReference type="KEGG" id="tne:Tneu_0045"/>
<dbReference type="eggNOG" id="arCOG00070">
    <property type="taxonomic scope" value="Archaea"/>
</dbReference>
<dbReference type="HOGENOM" id="CLU_022477_2_1_2"/>
<dbReference type="OrthoDB" id="5821at2157"/>
<dbReference type="UniPathway" id="UPA00288">
    <property type="reaction ID" value="UER01023"/>
</dbReference>
<dbReference type="Proteomes" id="UP000001694">
    <property type="component" value="Chromosome"/>
</dbReference>
<dbReference type="GO" id="GO:0005737">
    <property type="term" value="C:cytoplasm"/>
    <property type="evidence" value="ECO:0007669"/>
    <property type="project" value="UniProtKB-SubCell"/>
</dbReference>
<dbReference type="GO" id="GO:0004372">
    <property type="term" value="F:glycine hydroxymethyltransferase activity"/>
    <property type="evidence" value="ECO:0007669"/>
    <property type="project" value="UniProtKB-UniRule"/>
</dbReference>
<dbReference type="GO" id="GO:0030170">
    <property type="term" value="F:pyridoxal phosphate binding"/>
    <property type="evidence" value="ECO:0007669"/>
    <property type="project" value="UniProtKB-UniRule"/>
</dbReference>
<dbReference type="GO" id="GO:0019264">
    <property type="term" value="P:glycine biosynthetic process from serine"/>
    <property type="evidence" value="ECO:0007669"/>
    <property type="project" value="UniProtKB-UniRule"/>
</dbReference>
<dbReference type="GO" id="GO:0035999">
    <property type="term" value="P:tetrahydrofolate interconversion"/>
    <property type="evidence" value="ECO:0007669"/>
    <property type="project" value="InterPro"/>
</dbReference>
<dbReference type="CDD" id="cd00378">
    <property type="entry name" value="SHMT"/>
    <property type="match status" value="1"/>
</dbReference>
<dbReference type="FunFam" id="3.40.640.10:FF:000101">
    <property type="entry name" value="Serine hydroxymethyltransferase"/>
    <property type="match status" value="1"/>
</dbReference>
<dbReference type="FunFam" id="3.90.1150.10:FF:000114">
    <property type="entry name" value="Serine hydroxymethyltransferase"/>
    <property type="match status" value="1"/>
</dbReference>
<dbReference type="Gene3D" id="3.90.1150.10">
    <property type="entry name" value="Aspartate Aminotransferase, domain 1"/>
    <property type="match status" value="1"/>
</dbReference>
<dbReference type="Gene3D" id="3.40.640.10">
    <property type="entry name" value="Type I PLP-dependent aspartate aminotransferase-like (Major domain)"/>
    <property type="match status" value="1"/>
</dbReference>
<dbReference type="HAMAP" id="MF_00051">
    <property type="entry name" value="SHMT"/>
    <property type="match status" value="1"/>
</dbReference>
<dbReference type="InterPro" id="IPR015424">
    <property type="entry name" value="PyrdxlP-dep_Trfase"/>
</dbReference>
<dbReference type="InterPro" id="IPR015421">
    <property type="entry name" value="PyrdxlP-dep_Trfase_major"/>
</dbReference>
<dbReference type="InterPro" id="IPR015422">
    <property type="entry name" value="PyrdxlP-dep_Trfase_small"/>
</dbReference>
<dbReference type="InterPro" id="IPR001085">
    <property type="entry name" value="Ser_HO-MeTrfase"/>
</dbReference>
<dbReference type="InterPro" id="IPR049943">
    <property type="entry name" value="Ser_HO-MeTrfase-like"/>
</dbReference>
<dbReference type="InterPro" id="IPR019798">
    <property type="entry name" value="Ser_HO-MeTrfase_PLP_BS"/>
</dbReference>
<dbReference type="InterPro" id="IPR039429">
    <property type="entry name" value="SHMT-like_dom"/>
</dbReference>
<dbReference type="NCBIfam" id="NF000586">
    <property type="entry name" value="PRK00011.1"/>
    <property type="match status" value="1"/>
</dbReference>
<dbReference type="PANTHER" id="PTHR11680">
    <property type="entry name" value="SERINE HYDROXYMETHYLTRANSFERASE"/>
    <property type="match status" value="1"/>
</dbReference>
<dbReference type="PANTHER" id="PTHR11680:SF35">
    <property type="entry name" value="SERINE HYDROXYMETHYLTRANSFERASE 1"/>
    <property type="match status" value="1"/>
</dbReference>
<dbReference type="Pfam" id="PF00464">
    <property type="entry name" value="SHMT"/>
    <property type="match status" value="1"/>
</dbReference>
<dbReference type="PIRSF" id="PIRSF000412">
    <property type="entry name" value="SHMT"/>
    <property type="match status" value="1"/>
</dbReference>
<dbReference type="SUPFAM" id="SSF53383">
    <property type="entry name" value="PLP-dependent transferases"/>
    <property type="match status" value="1"/>
</dbReference>
<dbReference type="PROSITE" id="PS00096">
    <property type="entry name" value="SHMT"/>
    <property type="match status" value="1"/>
</dbReference>
<protein>
    <recommendedName>
        <fullName evidence="1">Serine hydroxymethyltransferase</fullName>
        <shortName evidence="1">SHMT</shortName>
        <shortName evidence="1">Serine methylase</shortName>
        <ecNumber evidence="1">2.1.2.-</ecNumber>
    </recommendedName>
</protein>
<organism>
    <name type="scientific">Pyrobaculum neutrophilum (strain DSM 2338 / JCM 9278 / NBRC 100436 / V24Sta)</name>
    <name type="common">Thermoproteus neutrophilus</name>
    <dbReference type="NCBI Taxonomy" id="444157"/>
    <lineage>
        <taxon>Archaea</taxon>
        <taxon>Thermoproteota</taxon>
        <taxon>Thermoprotei</taxon>
        <taxon>Thermoproteales</taxon>
        <taxon>Thermoproteaceae</taxon>
        <taxon>Pyrobaculum</taxon>
    </lineage>
</organism>
<name>GLYA_PYRNV</name>
<feature type="chain" id="PRO_0000369978" description="Serine hydroxymethyltransferase">
    <location>
        <begin position="1"/>
        <end position="430"/>
    </location>
</feature>
<feature type="binding site" evidence="1">
    <location>
        <begin position="120"/>
        <end position="122"/>
    </location>
    <ligand>
        <name>(6S)-5,6,7,8-tetrahydrofolate</name>
        <dbReference type="ChEBI" id="CHEBI:57453"/>
    </ligand>
</feature>
<feature type="site" description="Plays an important role in substrate specificity" evidence="1">
    <location>
        <position position="225"/>
    </location>
</feature>
<feature type="modified residue" description="N6-(pyridoxal phosphate)lysine" evidence="1">
    <location>
        <position position="226"/>
    </location>
</feature>
<sequence>MLPRELGEILDVVTRHNAWRRKETINLIASENVMSPLAELYYINDLAGRYAEGTVGNRYYQGTRYVDVLEDALVKKFSAVLEAKFVDVRPISGTVANLATYFALTPEGGTVASLPVKYGGHISHNTVGGVKALRLKTVELPWDLENFNVDVDAARKLIEEKRPNLIILGASLYLFPHPVKEVAEAAKTVGAYVLHDSAHVFGLIVGGVFPNPLKEGAHVTTASTHKTFPGPQGGVIATALDDERNSQIQRAVFPTFTSNYHLHRYAATYVTLVEMEVFGREYASRIVENARALAEALASEGVPPVAEKLGYTRTHQVAVDVSKFGGGDKAAALLEEANVIVNKNALPWDKSVLKPSGIRMGVQEMTRFGMGKDEMREIARFIARVLRGEDPAAVRRDVVEFRKSYLEIKYGFKIDRGEVEKVFNSLNLNT</sequence>